<proteinExistence type="inferred from homology"/>
<sequence length="356" mass="40497">MLDRLQSLEDRYNKLNEMLSDPEVINDSKKLREYSKEQSGLEDVVQAYREYKEVTEQLNDAKEMMEDKLDDEMYEMVKAEIAELNGRKEELESSMKILLLPKDPNDDKNVFMEIRGAAGGDEAALFAGDLYRMYSRYAEHQGWKIDVMEASSTGVGGYKEVIFMINGSDVYSKLKYENGAHRVQRVPETESGGRIHTSTATVAVLPEAEEVEVEVHDKDIRVDTFASSGPGGQSVNTTMSAVRLTHVPTGIVVSIQDEKSQIKNKEKAMKVLRARIYDKFQQEAQAEYDENRKSAVGSGDRSERIRTYNFPQNRVTDHRIGLTIQKLDQIMQGKLDEFIDALVMEEQTNKLEQIGE</sequence>
<accession>Q8EM60</accession>
<name>RF1_OCEIH</name>
<feature type="chain" id="PRO_0000177717" description="Peptide chain release factor 1">
    <location>
        <begin position="1"/>
        <end position="356"/>
    </location>
</feature>
<feature type="modified residue" description="N5-methylglutamine" evidence="1">
    <location>
        <position position="233"/>
    </location>
</feature>
<comment type="function">
    <text evidence="1">Peptide chain release factor 1 directs the termination of translation in response to the peptide chain termination codons UAG and UAA.</text>
</comment>
<comment type="subcellular location">
    <subcellularLocation>
        <location evidence="1">Cytoplasm</location>
    </subcellularLocation>
</comment>
<comment type="PTM">
    <text evidence="1">Methylated by PrmC. Methylation increases the termination efficiency of RF1.</text>
</comment>
<comment type="similarity">
    <text evidence="1">Belongs to the prokaryotic/mitochondrial release factor family.</text>
</comment>
<evidence type="ECO:0000255" key="1">
    <source>
        <dbReference type="HAMAP-Rule" id="MF_00093"/>
    </source>
</evidence>
<organism>
    <name type="scientific">Oceanobacillus iheyensis (strain DSM 14371 / CIP 107618 / JCM 11309 / KCTC 3954 / HTE831)</name>
    <dbReference type="NCBI Taxonomy" id="221109"/>
    <lineage>
        <taxon>Bacteria</taxon>
        <taxon>Bacillati</taxon>
        <taxon>Bacillota</taxon>
        <taxon>Bacilli</taxon>
        <taxon>Bacillales</taxon>
        <taxon>Bacillaceae</taxon>
        <taxon>Oceanobacillus</taxon>
    </lineage>
</organism>
<protein>
    <recommendedName>
        <fullName evidence="1">Peptide chain release factor 1</fullName>
        <shortName evidence="1">RF-1</shortName>
    </recommendedName>
</protein>
<gene>
    <name evidence="1" type="primary">prfA</name>
    <name type="ordered locus">OB2998</name>
</gene>
<dbReference type="EMBL" id="BA000028">
    <property type="protein sequence ID" value="BAC14954.1"/>
    <property type="molecule type" value="Genomic_DNA"/>
</dbReference>
<dbReference type="RefSeq" id="WP_011067394.1">
    <property type="nucleotide sequence ID" value="NC_004193.1"/>
</dbReference>
<dbReference type="SMR" id="Q8EM60"/>
<dbReference type="STRING" id="221109.gene:10735250"/>
<dbReference type="KEGG" id="oih:OB2998"/>
<dbReference type="eggNOG" id="COG0216">
    <property type="taxonomic scope" value="Bacteria"/>
</dbReference>
<dbReference type="HOGENOM" id="CLU_036856_0_1_9"/>
<dbReference type="OrthoDB" id="9806673at2"/>
<dbReference type="PhylomeDB" id="Q8EM60"/>
<dbReference type="Proteomes" id="UP000000822">
    <property type="component" value="Chromosome"/>
</dbReference>
<dbReference type="GO" id="GO:0005737">
    <property type="term" value="C:cytoplasm"/>
    <property type="evidence" value="ECO:0007669"/>
    <property type="project" value="UniProtKB-SubCell"/>
</dbReference>
<dbReference type="GO" id="GO:0016149">
    <property type="term" value="F:translation release factor activity, codon specific"/>
    <property type="evidence" value="ECO:0007669"/>
    <property type="project" value="UniProtKB-UniRule"/>
</dbReference>
<dbReference type="FunFam" id="3.30.160.20:FF:000004">
    <property type="entry name" value="Peptide chain release factor 1"/>
    <property type="match status" value="1"/>
</dbReference>
<dbReference type="FunFam" id="3.30.70.1660:FF:000002">
    <property type="entry name" value="Peptide chain release factor 1"/>
    <property type="match status" value="1"/>
</dbReference>
<dbReference type="FunFam" id="3.30.70.1660:FF:000004">
    <property type="entry name" value="Peptide chain release factor 1"/>
    <property type="match status" value="1"/>
</dbReference>
<dbReference type="Gene3D" id="3.30.160.20">
    <property type="match status" value="1"/>
</dbReference>
<dbReference type="Gene3D" id="3.30.70.1660">
    <property type="match status" value="1"/>
</dbReference>
<dbReference type="Gene3D" id="6.10.140.1950">
    <property type="match status" value="1"/>
</dbReference>
<dbReference type="HAMAP" id="MF_00093">
    <property type="entry name" value="Rel_fac_1"/>
    <property type="match status" value="1"/>
</dbReference>
<dbReference type="InterPro" id="IPR005139">
    <property type="entry name" value="PCRF"/>
</dbReference>
<dbReference type="InterPro" id="IPR000352">
    <property type="entry name" value="Pep_chain_release_fac_I"/>
</dbReference>
<dbReference type="InterPro" id="IPR045853">
    <property type="entry name" value="Pep_chain_release_fac_I_sf"/>
</dbReference>
<dbReference type="InterPro" id="IPR050057">
    <property type="entry name" value="Prokaryotic/Mito_RF"/>
</dbReference>
<dbReference type="InterPro" id="IPR004373">
    <property type="entry name" value="RF-1"/>
</dbReference>
<dbReference type="NCBIfam" id="TIGR00019">
    <property type="entry name" value="prfA"/>
    <property type="match status" value="1"/>
</dbReference>
<dbReference type="NCBIfam" id="NF001859">
    <property type="entry name" value="PRK00591.1"/>
    <property type="match status" value="1"/>
</dbReference>
<dbReference type="PANTHER" id="PTHR43804">
    <property type="entry name" value="LD18447P"/>
    <property type="match status" value="1"/>
</dbReference>
<dbReference type="PANTHER" id="PTHR43804:SF7">
    <property type="entry name" value="LD18447P"/>
    <property type="match status" value="1"/>
</dbReference>
<dbReference type="Pfam" id="PF03462">
    <property type="entry name" value="PCRF"/>
    <property type="match status" value="1"/>
</dbReference>
<dbReference type="Pfam" id="PF00472">
    <property type="entry name" value="RF-1"/>
    <property type="match status" value="1"/>
</dbReference>
<dbReference type="SMART" id="SM00937">
    <property type="entry name" value="PCRF"/>
    <property type="match status" value="1"/>
</dbReference>
<dbReference type="SUPFAM" id="SSF75620">
    <property type="entry name" value="Release factor"/>
    <property type="match status" value="1"/>
</dbReference>
<dbReference type="PROSITE" id="PS00745">
    <property type="entry name" value="RF_PROK_I"/>
    <property type="match status" value="1"/>
</dbReference>
<keyword id="KW-0963">Cytoplasm</keyword>
<keyword id="KW-0488">Methylation</keyword>
<keyword id="KW-0648">Protein biosynthesis</keyword>
<keyword id="KW-1185">Reference proteome</keyword>
<reference key="1">
    <citation type="journal article" date="2002" name="Nucleic Acids Res.">
        <title>Genome sequence of Oceanobacillus iheyensis isolated from the Iheya Ridge and its unexpected adaptive capabilities to extreme environments.</title>
        <authorList>
            <person name="Takami H."/>
            <person name="Takaki Y."/>
            <person name="Uchiyama I."/>
        </authorList>
    </citation>
    <scope>NUCLEOTIDE SEQUENCE [LARGE SCALE GENOMIC DNA]</scope>
    <source>
        <strain>DSM 14371 / CIP 107618 / JCM 11309 / KCTC 3954 / HTE831</strain>
    </source>
</reference>